<protein>
    <recommendedName>
        <fullName evidence="1">PqqA binding protein</fullName>
    </recommendedName>
    <alternativeName>
        <fullName evidence="1">Coenzyme PQQ synthesis protein D</fullName>
    </alternativeName>
    <alternativeName>
        <fullName evidence="1">Pyrroloquinoline quinone biosynthesis protein D</fullName>
    </alternativeName>
</protein>
<accession>C1DEW6</accession>
<name>PQQD_AZOVD</name>
<keyword id="KW-0884">PQQ biosynthesis</keyword>
<reference key="1">
    <citation type="journal article" date="2009" name="J. Bacteriol.">
        <title>Genome sequence of Azotobacter vinelandii, an obligate aerobe specialized to support diverse anaerobic metabolic processes.</title>
        <authorList>
            <person name="Setubal J.C."/>
            <person name="Dos Santos P."/>
            <person name="Goldman B.S."/>
            <person name="Ertesvaag H."/>
            <person name="Espin G."/>
            <person name="Rubio L.M."/>
            <person name="Valla S."/>
            <person name="Almeida N.F."/>
            <person name="Balasubramanian D."/>
            <person name="Cromes L."/>
            <person name="Curatti L."/>
            <person name="Du Z."/>
            <person name="Godsy E."/>
            <person name="Goodner B."/>
            <person name="Hellner-Burris K."/>
            <person name="Hernandez J.A."/>
            <person name="Houmiel K."/>
            <person name="Imperial J."/>
            <person name="Kennedy C."/>
            <person name="Larson T.J."/>
            <person name="Latreille P."/>
            <person name="Ligon L.S."/>
            <person name="Lu J."/>
            <person name="Maerk M."/>
            <person name="Miller N.M."/>
            <person name="Norton S."/>
            <person name="O'Carroll I.P."/>
            <person name="Paulsen I."/>
            <person name="Raulfs E.C."/>
            <person name="Roemer R."/>
            <person name="Rosser J."/>
            <person name="Segura D."/>
            <person name="Slater S."/>
            <person name="Stricklin S.L."/>
            <person name="Studholme D.J."/>
            <person name="Sun J."/>
            <person name="Viana C.J."/>
            <person name="Wallin E."/>
            <person name="Wang B."/>
            <person name="Wheeler C."/>
            <person name="Zhu H."/>
            <person name="Dean D.R."/>
            <person name="Dixon R."/>
            <person name="Wood D."/>
        </authorList>
    </citation>
    <scope>NUCLEOTIDE SEQUENCE [LARGE SCALE GENOMIC DNA]</scope>
    <source>
        <strain>DJ / ATCC BAA-1303</strain>
    </source>
</reference>
<proteinExistence type="inferred from homology"/>
<gene>
    <name evidence="1" type="primary">pqqD</name>
    <name type="ordered locus">Avin_41650</name>
</gene>
<evidence type="ECO:0000255" key="1">
    <source>
        <dbReference type="HAMAP-Rule" id="MF_00655"/>
    </source>
</evidence>
<sequence>MSETTLNDIPQLRRGFRFQWEPAQNCHVLLYPEGMVKLNDSAAAILGQVDGDRSIAAIVAALRERFPESDGIEEDVLEFLEVARERSWIELH</sequence>
<organism>
    <name type="scientific">Azotobacter vinelandii (strain DJ / ATCC BAA-1303)</name>
    <dbReference type="NCBI Taxonomy" id="322710"/>
    <lineage>
        <taxon>Bacteria</taxon>
        <taxon>Pseudomonadati</taxon>
        <taxon>Pseudomonadota</taxon>
        <taxon>Gammaproteobacteria</taxon>
        <taxon>Pseudomonadales</taxon>
        <taxon>Pseudomonadaceae</taxon>
        <taxon>Azotobacter</taxon>
    </lineage>
</organism>
<comment type="function">
    <text evidence="1">Functions as a PqqA binding protein and presents PqqA to PqqE, in the pyrroloquinoline quinone (PQQ) biosynthetic pathway.</text>
</comment>
<comment type="pathway">
    <text evidence="1">Cofactor biosynthesis; pyrroloquinoline quinone biosynthesis.</text>
</comment>
<comment type="subunit">
    <text evidence="1">Monomer. Interacts with PqqE.</text>
</comment>
<comment type="similarity">
    <text evidence="1">Belongs to the PqqD family.</text>
</comment>
<feature type="chain" id="PRO_1000212438" description="PqqA binding protein">
    <location>
        <begin position="1"/>
        <end position="92"/>
    </location>
</feature>
<dbReference type="EMBL" id="CP001157">
    <property type="protein sequence ID" value="ACO80295.1"/>
    <property type="molecule type" value="Genomic_DNA"/>
</dbReference>
<dbReference type="RefSeq" id="WP_012702667.1">
    <property type="nucleotide sequence ID" value="NC_012560.1"/>
</dbReference>
<dbReference type="SMR" id="C1DEW6"/>
<dbReference type="STRING" id="322710.Avin_41650"/>
<dbReference type="EnsemblBacteria" id="ACO80295">
    <property type="protein sequence ID" value="ACO80295"/>
    <property type="gene ID" value="Avin_41650"/>
</dbReference>
<dbReference type="GeneID" id="88187094"/>
<dbReference type="KEGG" id="avn:Avin_41650"/>
<dbReference type="eggNOG" id="ENOG5032Z81">
    <property type="taxonomic scope" value="Bacteria"/>
</dbReference>
<dbReference type="HOGENOM" id="CLU_163864_2_1_6"/>
<dbReference type="OrthoDB" id="7356791at2"/>
<dbReference type="UniPathway" id="UPA00539"/>
<dbReference type="Proteomes" id="UP000002424">
    <property type="component" value="Chromosome"/>
</dbReference>
<dbReference type="GO" id="GO:0048038">
    <property type="term" value="F:quinone binding"/>
    <property type="evidence" value="ECO:0007669"/>
    <property type="project" value="InterPro"/>
</dbReference>
<dbReference type="GO" id="GO:0018189">
    <property type="term" value="P:pyrroloquinoline quinone biosynthetic process"/>
    <property type="evidence" value="ECO:0007669"/>
    <property type="project" value="UniProtKB-UniRule"/>
</dbReference>
<dbReference type="Gene3D" id="1.10.10.1150">
    <property type="entry name" value="Coenzyme PQQ synthesis protein D (PqqD)"/>
    <property type="match status" value="1"/>
</dbReference>
<dbReference type="HAMAP" id="MF_00655">
    <property type="entry name" value="PQQ_syn_PqqD"/>
    <property type="match status" value="1"/>
</dbReference>
<dbReference type="InterPro" id="IPR008792">
    <property type="entry name" value="PQQD"/>
</dbReference>
<dbReference type="InterPro" id="IPR022479">
    <property type="entry name" value="PqqD_bac"/>
</dbReference>
<dbReference type="InterPro" id="IPR041881">
    <property type="entry name" value="PqqD_sf"/>
</dbReference>
<dbReference type="NCBIfam" id="TIGR03859">
    <property type="entry name" value="PQQ_PqqD"/>
    <property type="match status" value="1"/>
</dbReference>
<dbReference type="NCBIfam" id="NF002535">
    <property type="entry name" value="PRK02079.1"/>
    <property type="match status" value="1"/>
</dbReference>
<dbReference type="Pfam" id="PF05402">
    <property type="entry name" value="PqqD"/>
    <property type="match status" value="1"/>
</dbReference>